<protein>
    <recommendedName>
        <fullName evidence="1">1-(5-phosphoribosyl)-5-[(5-phosphoribosylamino)methylideneamino] imidazole-4-carboxamide isomerase</fullName>
        <ecNumber evidence="1">5.3.1.16</ecNumber>
    </recommendedName>
    <alternativeName>
        <fullName evidence="1">Phosphoribosylformimino-5-aminoimidazole carboxamide ribotide isomerase</fullName>
    </alternativeName>
</protein>
<keyword id="KW-0028">Amino-acid biosynthesis</keyword>
<keyword id="KW-0963">Cytoplasm</keyword>
<keyword id="KW-0368">Histidine biosynthesis</keyword>
<keyword id="KW-0413">Isomerase</keyword>
<keyword id="KW-1185">Reference proteome</keyword>
<feature type="chain" id="PRO_0000229090" description="1-(5-phosphoribosyl)-5-[(5-phosphoribosylamino)methylideneamino] imidazole-4-carboxamide isomerase">
    <location>
        <begin position="1"/>
        <end position="251"/>
    </location>
</feature>
<feature type="active site" description="Proton acceptor" evidence="1">
    <location>
        <position position="8"/>
    </location>
</feature>
<feature type="active site" description="Proton donor" evidence="1">
    <location>
        <position position="131"/>
    </location>
</feature>
<organism>
    <name type="scientific">Thiobacillus denitrificans (strain ATCC 25259 / T1)</name>
    <dbReference type="NCBI Taxonomy" id="292415"/>
    <lineage>
        <taxon>Bacteria</taxon>
        <taxon>Pseudomonadati</taxon>
        <taxon>Pseudomonadota</taxon>
        <taxon>Betaproteobacteria</taxon>
        <taxon>Nitrosomonadales</taxon>
        <taxon>Thiobacillaceae</taxon>
        <taxon>Thiobacillus</taxon>
    </lineage>
</organism>
<reference key="1">
    <citation type="journal article" date="2006" name="J. Bacteriol.">
        <title>The genome sequence of the obligately chemolithoautotrophic, facultatively anaerobic bacterium Thiobacillus denitrificans.</title>
        <authorList>
            <person name="Beller H.R."/>
            <person name="Chain P.S."/>
            <person name="Letain T.E."/>
            <person name="Chakicherla A."/>
            <person name="Larimer F.W."/>
            <person name="Richardson P.M."/>
            <person name="Coleman M.A."/>
            <person name="Wood A.P."/>
            <person name="Kelly D.P."/>
        </authorList>
    </citation>
    <scope>NUCLEOTIDE SEQUENCE [LARGE SCALE GENOMIC DNA]</scope>
    <source>
        <strain>ATCC 25259 / T1</strain>
    </source>
</reference>
<name>HIS4_THIDA</name>
<comment type="catalytic activity">
    <reaction evidence="1">
        <text>1-(5-phospho-beta-D-ribosyl)-5-[(5-phospho-beta-D-ribosylamino)methylideneamino]imidazole-4-carboxamide = 5-[(5-phospho-1-deoxy-D-ribulos-1-ylimino)methylamino]-1-(5-phospho-beta-D-ribosyl)imidazole-4-carboxamide</text>
        <dbReference type="Rhea" id="RHEA:15469"/>
        <dbReference type="ChEBI" id="CHEBI:58435"/>
        <dbReference type="ChEBI" id="CHEBI:58525"/>
        <dbReference type="EC" id="5.3.1.16"/>
    </reaction>
</comment>
<comment type="pathway">
    <text evidence="1">Amino-acid biosynthesis; L-histidine biosynthesis; L-histidine from 5-phospho-alpha-D-ribose 1-diphosphate: step 4/9.</text>
</comment>
<comment type="subcellular location">
    <subcellularLocation>
        <location evidence="1">Cytoplasm</location>
    </subcellularLocation>
</comment>
<comment type="similarity">
    <text evidence="1">Belongs to the HisA/HisF family.</text>
</comment>
<dbReference type="EC" id="5.3.1.16" evidence="1"/>
<dbReference type="EMBL" id="CP000116">
    <property type="protein sequence ID" value="AAZ97662.1"/>
    <property type="molecule type" value="Genomic_DNA"/>
</dbReference>
<dbReference type="RefSeq" id="WP_011312221.1">
    <property type="nucleotide sequence ID" value="NC_007404.1"/>
</dbReference>
<dbReference type="SMR" id="Q3SEU7"/>
<dbReference type="STRING" id="292415.Tbd_1709"/>
<dbReference type="KEGG" id="tbd:Tbd_1709"/>
<dbReference type="eggNOG" id="COG0106">
    <property type="taxonomic scope" value="Bacteria"/>
</dbReference>
<dbReference type="HOGENOM" id="CLU_048577_1_1_4"/>
<dbReference type="OrthoDB" id="9807749at2"/>
<dbReference type="UniPathway" id="UPA00031">
    <property type="reaction ID" value="UER00009"/>
</dbReference>
<dbReference type="Proteomes" id="UP000008291">
    <property type="component" value="Chromosome"/>
</dbReference>
<dbReference type="GO" id="GO:0005737">
    <property type="term" value="C:cytoplasm"/>
    <property type="evidence" value="ECO:0007669"/>
    <property type="project" value="UniProtKB-SubCell"/>
</dbReference>
<dbReference type="GO" id="GO:0003949">
    <property type="term" value="F:1-(5-phosphoribosyl)-5-[(5-phosphoribosylamino)methylideneamino]imidazole-4-carboxamide isomerase activity"/>
    <property type="evidence" value="ECO:0007669"/>
    <property type="project" value="UniProtKB-UniRule"/>
</dbReference>
<dbReference type="GO" id="GO:0000105">
    <property type="term" value="P:L-histidine biosynthetic process"/>
    <property type="evidence" value="ECO:0007669"/>
    <property type="project" value="UniProtKB-UniRule"/>
</dbReference>
<dbReference type="GO" id="GO:0000162">
    <property type="term" value="P:L-tryptophan biosynthetic process"/>
    <property type="evidence" value="ECO:0007669"/>
    <property type="project" value="TreeGrafter"/>
</dbReference>
<dbReference type="CDD" id="cd04732">
    <property type="entry name" value="HisA"/>
    <property type="match status" value="1"/>
</dbReference>
<dbReference type="FunFam" id="3.20.20.70:FF:000009">
    <property type="entry name" value="1-(5-phosphoribosyl)-5-[(5-phosphoribosylamino)methylideneamino] imidazole-4-carboxamide isomerase"/>
    <property type="match status" value="1"/>
</dbReference>
<dbReference type="Gene3D" id="3.20.20.70">
    <property type="entry name" value="Aldolase class I"/>
    <property type="match status" value="1"/>
</dbReference>
<dbReference type="HAMAP" id="MF_01014">
    <property type="entry name" value="HisA"/>
    <property type="match status" value="1"/>
</dbReference>
<dbReference type="InterPro" id="IPR013785">
    <property type="entry name" value="Aldolase_TIM"/>
</dbReference>
<dbReference type="InterPro" id="IPR006062">
    <property type="entry name" value="His_biosynth"/>
</dbReference>
<dbReference type="InterPro" id="IPR006063">
    <property type="entry name" value="HisA_bact_arch"/>
</dbReference>
<dbReference type="InterPro" id="IPR044524">
    <property type="entry name" value="Isoase_HisA-like"/>
</dbReference>
<dbReference type="InterPro" id="IPR023016">
    <property type="entry name" value="Isoase_HisA-like_bact"/>
</dbReference>
<dbReference type="InterPro" id="IPR011060">
    <property type="entry name" value="RibuloseP-bd_barrel"/>
</dbReference>
<dbReference type="NCBIfam" id="TIGR00007">
    <property type="entry name" value="1-(5-phosphoribosyl)-5-[(5-phosphoribosylamino)methylideneamino]imidazole-4-carboxamide isomerase"/>
    <property type="match status" value="1"/>
</dbReference>
<dbReference type="NCBIfam" id="NF010112">
    <property type="entry name" value="PRK13585.1"/>
    <property type="match status" value="1"/>
</dbReference>
<dbReference type="PANTHER" id="PTHR43090">
    <property type="entry name" value="1-(5-PHOSPHORIBOSYL)-5-[(5-PHOSPHORIBOSYLAMINO)METHYLIDENEAMINO] IMIDAZOLE-4-CARBOXAMIDE ISOMERASE"/>
    <property type="match status" value="1"/>
</dbReference>
<dbReference type="PANTHER" id="PTHR43090:SF2">
    <property type="entry name" value="1-(5-PHOSPHORIBOSYL)-5-[(5-PHOSPHORIBOSYLAMINO)METHYLIDENEAMINO] IMIDAZOLE-4-CARBOXAMIDE ISOMERASE"/>
    <property type="match status" value="1"/>
</dbReference>
<dbReference type="Pfam" id="PF00977">
    <property type="entry name" value="His_biosynth"/>
    <property type="match status" value="1"/>
</dbReference>
<dbReference type="SUPFAM" id="SSF51366">
    <property type="entry name" value="Ribulose-phoshate binding barrel"/>
    <property type="match status" value="1"/>
</dbReference>
<accession>Q3SEU7</accession>
<gene>
    <name evidence="1" type="primary">hisA</name>
    <name type="ordered locus">Tbd_1709</name>
</gene>
<evidence type="ECO:0000255" key="1">
    <source>
        <dbReference type="HAMAP-Rule" id="MF_01014"/>
    </source>
</evidence>
<proteinExistence type="inferred from homology"/>
<sequence>MLIIPAIDLKDGHCVRLEQGEMDKATVFSEDPAAMARRWKEHGARRLHLVDLNGAFAGKPVNDAAIQAIVEAVGDEMPVQLGGGIRDLATIERYLDDGVRYVIIGTAAVKNPGFLHEACDAFPGHVMVGLDARDGKVAVEGWSKLTGHDVVDLAKRFEGYGVEAVIYTDIGRDGMLTGVNIDATQRLAQALSIPVIASGGVTNLDDVRGLSAVAKDGIIGAITGRAIYQGTLDFAEAQKLADELAGGVFGV</sequence>